<dbReference type="EC" id="1.1.5.4" evidence="1"/>
<dbReference type="EMBL" id="CP000227">
    <property type="protein sequence ID" value="ACM13223.1"/>
    <property type="molecule type" value="Genomic_DNA"/>
</dbReference>
<dbReference type="SMR" id="B9J484"/>
<dbReference type="KEGG" id="bcq:BCQ_2795"/>
<dbReference type="HOGENOM" id="CLU_028151_0_0_9"/>
<dbReference type="UniPathway" id="UPA00223">
    <property type="reaction ID" value="UER01008"/>
</dbReference>
<dbReference type="Proteomes" id="UP000000441">
    <property type="component" value="Chromosome"/>
</dbReference>
<dbReference type="GO" id="GO:0047545">
    <property type="term" value="F:2-hydroxyglutarate dehydrogenase activity"/>
    <property type="evidence" value="ECO:0007669"/>
    <property type="project" value="TreeGrafter"/>
</dbReference>
<dbReference type="GO" id="GO:0008924">
    <property type="term" value="F:L-malate dehydrogenase (quinone) activity"/>
    <property type="evidence" value="ECO:0007669"/>
    <property type="project" value="UniProtKB-UniRule"/>
</dbReference>
<dbReference type="GO" id="GO:0006099">
    <property type="term" value="P:tricarboxylic acid cycle"/>
    <property type="evidence" value="ECO:0007669"/>
    <property type="project" value="UniProtKB-UniRule"/>
</dbReference>
<dbReference type="HAMAP" id="MF_00212">
    <property type="entry name" value="MQO"/>
    <property type="match status" value="1"/>
</dbReference>
<dbReference type="InterPro" id="IPR036188">
    <property type="entry name" value="FAD/NAD-bd_sf"/>
</dbReference>
<dbReference type="InterPro" id="IPR006231">
    <property type="entry name" value="MQO"/>
</dbReference>
<dbReference type="NCBIfam" id="TIGR01320">
    <property type="entry name" value="mal_quin_oxido"/>
    <property type="match status" value="1"/>
</dbReference>
<dbReference type="NCBIfam" id="NF003603">
    <property type="entry name" value="PRK05257.1-1"/>
    <property type="match status" value="1"/>
</dbReference>
<dbReference type="NCBIfam" id="NF003604">
    <property type="entry name" value="PRK05257.1-3"/>
    <property type="match status" value="1"/>
</dbReference>
<dbReference type="NCBIfam" id="NF003605">
    <property type="entry name" value="PRK05257.1-4"/>
    <property type="match status" value="1"/>
</dbReference>
<dbReference type="NCBIfam" id="NF003606">
    <property type="entry name" value="PRK05257.2-1"/>
    <property type="match status" value="1"/>
</dbReference>
<dbReference type="NCBIfam" id="NF003608">
    <property type="entry name" value="PRK05257.2-4"/>
    <property type="match status" value="1"/>
</dbReference>
<dbReference type="NCBIfam" id="NF003610">
    <property type="entry name" value="PRK05257.3-1"/>
    <property type="match status" value="1"/>
</dbReference>
<dbReference type="NCBIfam" id="NF003611">
    <property type="entry name" value="PRK05257.3-2"/>
    <property type="match status" value="1"/>
</dbReference>
<dbReference type="NCBIfam" id="NF009875">
    <property type="entry name" value="PRK13339.1"/>
    <property type="match status" value="1"/>
</dbReference>
<dbReference type="PANTHER" id="PTHR43104">
    <property type="entry name" value="L-2-HYDROXYGLUTARATE DEHYDROGENASE, MITOCHONDRIAL"/>
    <property type="match status" value="1"/>
</dbReference>
<dbReference type="PANTHER" id="PTHR43104:SF2">
    <property type="entry name" value="L-2-HYDROXYGLUTARATE DEHYDROGENASE, MITOCHONDRIAL"/>
    <property type="match status" value="1"/>
</dbReference>
<dbReference type="Pfam" id="PF06039">
    <property type="entry name" value="Mqo"/>
    <property type="match status" value="1"/>
</dbReference>
<dbReference type="SUPFAM" id="SSF51905">
    <property type="entry name" value="FAD/NAD(P)-binding domain"/>
    <property type="match status" value="1"/>
</dbReference>
<reference key="1">
    <citation type="journal article" date="2009" name="J. Bacteriol.">
        <title>Complete genome sequence of the extremophilic Bacillus cereus strain Q1 with industrial applications.</title>
        <authorList>
            <person name="Xiong Z."/>
            <person name="Jiang Y."/>
            <person name="Qi D."/>
            <person name="Lu H."/>
            <person name="Yang F."/>
            <person name="Yang J."/>
            <person name="Chen L."/>
            <person name="Sun L."/>
            <person name="Xu X."/>
            <person name="Xue Y."/>
            <person name="Zhu Y."/>
            <person name="Jin Q."/>
        </authorList>
    </citation>
    <scope>NUCLEOTIDE SEQUENCE [LARGE SCALE GENOMIC DNA]</scope>
    <source>
        <strain>Q1</strain>
    </source>
</reference>
<organism>
    <name type="scientific">Bacillus cereus (strain Q1)</name>
    <dbReference type="NCBI Taxonomy" id="361100"/>
    <lineage>
        <taxon>Bacteria</taxon>
        <taxon>Bacillati</taxon>
        <taxon>Bacillota</taxon>
        <taxon>Bacilli</taxon>
        <taxon>Bacillales</taxon>
        <taxon>Bacillaceae</taxon>
        <taxon>Bacillus</taxon>
        <taxon>Bacillus cereus group</taxon>
    </lineage>
</organism>
<comment type="catalytic activity">
    <reaction evidence="1">
        <text>(S)-malate + a quinone = a quinol + oxaloacetate</text>
        <dbReference type="Rhea" id="RHEA:46012"/>
        <dbReference type="ChEBI" id="CHEBI:15589"/>
        <dbReference type="ChEBI" id="CHEBI:16452"/>
        <dbReference type="ChEBI" id="CHEBI:24646"/>
        <dbReference type="ChEBI" id="CHEBI:132124"/>
        <dbReference type="EC" id="1.1.5.4"/>
    </reaction>
</comment>
<comment type="cofactor">
    <cofactor evidence="1">
        <name>FAD</name>
        <dbReference type="ChEBI" id="CHEBI:57692"/>
    </cofactor>
</comment>
<comment type="pathway">
    <text evidence="1">Carbohydrate metabolism; tricarboxylic acid cycle; oxaloacetate from (S)-malate (quinone route): step 1/1.</text>
</comment>
<comment type="similarity">
    <text evidence="1">Belongs to the MQO family.</text>
</comment>
<gene>
    <name evidence="1" type="primary">mqo</name>
    <name type="ordered locus">BCQ_2795</name>
</gene>
<evidence type="ECO:0000255" key="1">
    <source>
        <dbReference type="HAMAP-Rule" id="MF_00212"/>
    </source>
</evidence>
<accession>B9J484</accession>
<name>MQO_BACCQ</name>
<sequence length="500" mass="55195">MSNMQQKTDVILIGAGIMSATLGSLLKELAPEWEIKVFEKLASAGEESSNEWNNAGTGHSALCELNYTSEKSDGSIDISKAVKVNEQFQLSRQFWAYLVKSKLIRNPQDFIMPLPHMSLVQGEKNVQFLKNRFEALSKNPLFQGMEFSDSPETLKKWLPLIMEGRTSNEPMAATKIDSGTDVNFGALTRMLFDYLKTKNVELNYKHSVENIKRTKNGLWEVKVHDMNSGKIEHHTAKFVFIGGGGGSLPLLQKTGIPESKHIGGFPVSGLFMVCKNQKVVEQHHAKVYGKAKVGAPPMSVPHLDTRYIDNKKALLFGPFAGFSPKFLKTGSNLDLIGSVKPNNVLTMLAAGVKEMGLTKYLIQQVMLSHEKRMEELREFIPNAKSEDWDIVVAGQRVQVIKDTDAGGKGTLQFGTEVVSAADGSIAALLGASPGASTAVHVMLEVLEKCFPSRMVEWEGKIKEMIPSYGISLTENPRLFQDLHTSTGRTLGLNEKETVHN</sequence>
<feature type="chain" id="PRO_1000124765" description="Probable malate:quinone oxidoreductase">
    <location>
        <begin position="1"/>
        <end position="500"/>
    </location>
</feature>
<proteinExistence type="inferred from homology"/>
<keyword id="KW-0274">FAD</keyword>
<keyword id="KW-0285">Flavoprotein</keyword>
<keyword id="KW-0560">Oxidoreductase</keyword>
<keyword id="KW-0816">Tricarboxylic acid cycle</keyword>
<protein>
    <recommendedName>
        <fullName evidence="1">Probable malate:quinone oxidoreductase</fullName>
        <ecNumber evidence="1">1.1.5.4</ecNumber>
    </recommendedName>
    <alternativeName>
        <fullName evidence="1">MQO</fullName>
    </alternativeName>
    <alternativeName>
        <fullName evidence="1">Malate dehydrogenase [quinone]</fullName>
    </alternativeName>
</protein>